<keyword id="KW-0687">Ribonucleoprotein</keyword>
<keyword id="KW-0689">Ribosomal protein</keyword>
<reference key="1">
    <citation type="journal article" date="2008" name="Environ. Microbiol.">
        <title>The complete genome sequence of Moorella thermoacetica (f. Clostridium thermoaceticum).</title>
        <authorList>
            <person name="Pierce E."/>
            <person name="Xie G."/>
            <person name="Barabote R.D."/>
            <person name="Saunders E."/>
            <person name="Han C.S."/>
            <person name="Detter J.C."/>
            <person name="Richardson P."/>
            <person name="Brettin T.S."/>
            <person name="Das A."/>
            <person name="Ljungdahl L.G."/>
            <person name="Ragsdale S.W."/>
        </authorList>
    </citation>
    <scope>NUCLEOTIDE SEQUENCE [LARGE SCALE GENOMIC DNA]</scope>
    <source>
        <strain>ATCC 39073 / JCM 9320</strain>
    </source>
</reference>
<dbReference type="EMBL" id="CP000232">
    <property type="protein sequence ID" value="ABC20734.1"/>
    <property type="molecule type" value="Genomic_DNA"/>
</dbReference>
<dbReference type="RefSeq" id="YP_431277.1">
    <property type="nucleotide sequence ID" value="NC_007644.1"/>
</dbReference>
<dbReference type="SMR" id="Q2RFQ5"/>
<dbReference type="STRING" id="264732.Moth_2452"/>
<dbReference type="EnsemblBacteria" id="ABC20734">
    <property type="protein sequence ID" value="ABC20734"/>
    <property type="gene ID" value="Moth_2452"/>
</dbReference>
<dbReference type="KEGG" id="mta:Moth_2452"/>
<dbReference type="PATRIC" id="fig|264732.11.peg.2670"/>
<dbReference type="eggNOG" id="COG0255">
    <property type="taxonomic scope" value="Bacteria"/>
</dbReference>
<dbReference type="HOGENOM" id="CLU_158491_5_2_9"/>
<dbReference type="OrthoDB" id="9815192at2"/>
<dbReference type="GO" id="GO:0022625">
    <property type="term" value="C:cytosolic large ribosomal subunit"/>
    <property type="evidence" value="ECO:0007669"/>
    <property type="project" value="TreeGrafter"/>
</dbReference>
<dbReference type="GO" id="GO:0003735">
    <property type="term" value="F:structural constituent of ribosome"/>
    <property type="evidence" value="ECO:0007669"/>
    <property type="project" value="InterPro"/>
</dbReference>
<dbReference type="GO" id="GO:0006412">
    <property type="term" value="P:translation"/>
    <property type="evidence" value="ECO:0007669"/>
    <property type="project" value="UniProtKB-UniRule"/>
</dbReference>
<dbReference type="CDD" id="cd00427">
    <property type="entry name" value="Ribosomal_L29_HIP"/>
    <property type="match status" value="1"/>
</dbReference>
<dbReference type="FunFam" id="1.10.287.310:FF:000001">
    <property type="entry name" value="50S ribosomal protein L29"/>
    <property type="match status" value="1"/>
</dbReference>
<dbReference type="Gene3D" id="1.10.287.310">
    <property type="match status" value="1"/>
</dbReference>
<dbReference type="HAMAP" id="MF_00374">
    <property type="entry name" value="Ribosomal_uL29"/>
    <property type="match status" value="1"/>
</dbReference>
<dbReference type="InterPro" id="IPR050063">
    <property type="entry name" value="Ribosomal_protein_uL29"/>
</dbReference>
<dbReference type="InterPro" id="IPR001854">
    <property type="entry name" value="Ribosomal_uL29"/>
</dbReference>
<dbReference type="InterPro" id="IPR018254">
    <property type="entry name" value="Ribosomal_uL29_CS"/>
</dbReference>
<dbReference type="InterPro" id="IPR036049">
    <property type="entry name" value="Ribosomal_uL29_sf"/>
</dbReference>
<dbReference type="NCBIfam" id="TIGR00012">
    <property type="entry name" value="L29"/>
    <property type="match status" value="1"/>
</dbReference>
<dbReference type="PANTHER" id="PTHR10916">
    <property type="entry name" value="60S RIBOSOMAL PROTEIN L35/50S RIBOSOMAL PROTEIN L29"/>
    <property type="match status" value="1"/>
</dbReference>
<dbReference type="PANTHER" id="PTHR10916:SF0">
    <property type="entry name" value="LARGE RIBOSOMAL SUBUNIT PROTEIN UL29C"/>
    <property type="match status" value="1"/>
</dbReference>
<dbReference type="Pfam" id="PF00831">
    <property type="entry name" value="Ribosomal_L29"/>
    <property type="match status" value="1"/>
</dbReference>
<dbReference type="SUPFAM" id="SSF46561">
    <property type="entry name" value="Ribosomal protein L29 (L29p)"/>
    <property type="match status" value="1"/>
</dbReference>
<dbReference type="PROSITE" id="PS00579">
    <property type="entry name" value="RIBOSOMAL_L29"/>
    <property type="match status" value="1"/>
</dbReference>
<name>RL29_MOOTA</name>
<accession>Q2RFQ5</accession>
<sequence length="67" mass="8154">MKAKEIRDLTTEELRQKVNELKQELFNLRFQLATNQMDNPMRLKEVRRSIARAKTILRERELKQQRA</sequence>
<protein>
    <recommendedName>
        <fullName evidence="1">Large ribosomal subunit protein uL29</fullName>
    </recommendedName>
    <alternativeName>
        <fullName evidence="2">50S ribosomal protein L29</fullName>
    </alternativeName>
</protein>
<proteinExistence type="inferred from homology"/>
<evidence type="ECO:0000255" key="1">
    <source>
        <dbReference type="HAMAP-Rule" id="MF_00374"/>
    </source>
</evidence>
<evidence type="ECO:0000305" key="2"/>
<comment type="similarity">
    <text evidence="1">Belongs to the universal ribosomal protein uL29 family.</text>
</comment>
<organism>
    <name type="scientific">Moorella thermoacetica (strain ATCC 39073 / JCM 9320)</name>
    <dbReference type="NCBI Taxonomy" id="264732"/>
    <lineage>
        <taxon>Bacteria</taxon>
        <taxon>Bacillati</taxon>
        <taxon>Bacillota</taxon>
        <taxon>Clostridia</taxon>
        <taxon>Moorellales</taxon>
        <taxon>Moorellaceae</taxon>
        <taxon>Moorella</taxon>
    </lineage>
</organism>
<gene>
    <name evidence="1" type="primary">rpmC</name>
    <name type="ordered locus">Moth_2452</name>
</gene>
<feature type="chain" id="PRO_1000007525" description="Large ribosomal subunit protein uL29">
    <location>
        <begin position="1"/>
        <end position="67"/>
    </location>
</feature>